<name>NADD_DESPS</name>
<proteinExistence type="inferred from homology"/>
<comment type="function">
    <text evidence="1">Catalyzes the reversible adenylation of nicotinate mononucleotide (NaMN) to nicotinic acid adenine dinucleotide (NaAD).</text>
</comment>
<comment type="catalytic activity">
    <reaction evidence="1">
        <text>nicotinate beta-D-ribonucleotide + ATP + H(+) = deamido-NAD(+) + diphosphate</text>
        <dbReference type="Rhea" id="RHEA:22860"/>
        <dbReference type="ChEBI" id="CHEBI:15378"/>
        <dbReference type="ChEBI" id="CHEBI:30616"/>
        <dbReference type="ChEBI" id="CHEBI:33019"/>
        <dbReference type="ChEBI" id="CHEBI:57502"/>
        <dbReference type="ChEBI" id="CHEBI:58437"/>
        <dbReference type="EC" id="2.7.7.18"/>
    </reaction>
</comment>
<comment type="pathway">
    <text evidence="1">Cofactor biosynthesis; NAD(+) biosynthesis; deamido-NAD(+) from nicotinate D-ribonucleotide: step 1/1.</text>
</comment>
<comment type="similarity">
    <text evidence="1">Belongs to the NadD family.</text>
</comment>
<comment type="sequence caution" evidence="2">
    <conflict type="erroneous initiation">
        <sequence resource="EMBL-CDS" id="CAG37316"/>
    </conflict>
</comment>
<keyword id="KW-0067">ATP-binding</keyword>
<keyword id="KW-0520">NAD</keyword>
<keyword id="KW-0547">Nucleotide-binding</keyword>
<keyword id="KW-0548">Nucleotidyltransferase</keyword>
<keyword id="KW-0662">Pyridine nucleotide biosynthesis</keyword>
<keyword id="KW-1185">Reference proteome</keyword>
<keyword id="KW-0808">Transferase</keyword>
<accession>Q6AK10</accession>
<evidence type="ECO:0000255" key="1">
    <source>
        <dbReference type="HAMAP-Rule" id="MF_00244"/>
    </source>
</evidence>
<evidence type="ECO:0000305" key="2"/>
<feature type="chain" id="PRO_0000336687" description="Probable nicotinate-nucleotide adenylyltransferase">
    <location>
        <begin position="1"/>
        <end position="211"/>
    </location>
</feature>
<reference key="1">
    <citation type="journal article" date="2004" name="Environ. Microbiol.">
        <title>The genome of Desulfotalea psychrophila, a sulfate-reducing bacterium from permanently cold Arctic sediments.</title>
        <authorList>
            <person name="Rabus R."/>
            <person name="Ruepp A."/>
            <person name="Frickey T."/>
            <person name="Rattei T."/>
            <person name="Fartmann B."/>
            <person name="Stark M."/>
            <person name="Bauer M."/>
            <person name="Zibat A."/>
            <person name="Lombardot T."/>
            <person name="Becker I."/>
            <person name="Amann J."/>
            <person name="Gellner K."/>
            <person name="Teeling H."/>
            <person name="Leuschner W.D."/>
            <person name="Gloeckner F.-O."/>
            <person name="Lupas A.N."/>
            <person name="Amann R."/>
            <person name="Klenk H.-P."/>
        </authorList>
    </citation>
    <scope>NUCLEOTIDE SEQUENCE [LARGE SCALE GENOMIC DNA]</scope>
    <source>
        <strain>DSM 12343 / LSv54</strain>
    </source>
</reference>
<organism>
    <name type="scientific">Desulfotalea psychrophila (strain LSv54 / DSM 12343)</name>
    <dbReference type="NCBI Taxonomy" id="177439"/>
    <lineage>
        <taxon>Bacteria</taxon>
        <taxon>Pseudomonadati</taxon>
        <taxon>Thermodesulfobacteriota</taxon>
        <taxon>Desulfobulbia</taxon>
        <taxon>Desulfobulbales</taxon>
        <taxon>Desulfocapsaceae</taxon>
        <taxon>Desulfotalea</taxon>
    </lineage>
</organism>
<protein>
    <recommendedName>
        <fullName evidence="1">Probable nicotinate-nucleotide adenylyltransferase</fullName>
        <ecNumber evidence="1">2.7.7.18</ecNumber>
    </recommendedName>
    <alternativeName>
        <fullName evidence="1">Deamido-NAD(+) diphosphorylase</fullName>
    </alternativeName>
    <alternativeName>
        <fullName evidence="1">Deamido-NAD(+) pyrophosphorylase</fullName>
    </alternativeName>
    <alternativeName>
        <fullName evidence="1">Nicotinate mononucleotide adenylyltransferase</fullName>
        <shortName evidence="1">NaMN adenylyltransferase</shortName>
    </alternativeName>
</protein>
<sequence>MKKIGLFGGTFNPLHNGHLQLAEFAAAQCQLDQVVFLPAASPPHKKGDEIVPFSHRAEMIRLACSRNKRFSCNTIEQDLARPSYTVDTLQALKTSPLYKSEAQFFFLIGVDAFIELKTWKAYRDLLSEINFILCPRKLFSRTQTVLFLTELGFVQTPLGWEHSSYLTLYELEGAPDQVSSTEVRRTFEKSGDLYQKLPPTVADYIMKHGLY</sequence>
<dbReference type="EC" id="2.7.7.18" evidence="1"/>
<dbReference type="EMBL" id="CR522870">
    <property type="protein sequence ID" value="CAG37316.1"/>
    <property type="status" value="ALT_INIT"/>
    <property type="molecule type" value="Genomic_DNA"/>
</dbReference>
<dbReference type="RefSeq" id="WP_049785106.1">
    <property type="nucleotide sequence ID" value="NC_006138.1"/>
</dbReference>
<dbReference type="SMR" id="Q6AK10"/>
<dbReference type="STRING" id="177439.DP2587"/>
<dbReference type="KEGG" id="dps:DP2587"/>
<dbReference type="eggNOG" id="COG1057">
    <property type="taxonomic scope" value="Bacteria"/>
</dbReference>
<dbReference type="HOGENOM" id="CLU_069765_0_1_7"/>
<dbReference type="OrthoDB" id="5295945at2"/>
<dbReference type="UniPathway" id="UPA00253">
    <property type="reaction ID" value="UER00332"/>
</dbReference>
<dbReference type="Proteomes" id="UP000000602">
    <property type="component" value="Chromosome"/>
</dbReference>
<dbReference type="GO" id="GO:0005524">
    <property type="term" value="F:ATP binding"/>
    <property type="evidence" value="ECO:0007669"/>
    <property type="project" value="UniProtKB-KW"/>
</dbReference>
<dbReference type="GO" id="GO:0004515">
    <property type="term" value="F:nicotinate-nucleotide adenylyltransferase activity"/>
    <property type="evidence" value="ECO:0007669"/>
    <property type="project" value="UniProtKB-UniRule"/>
</dbReference>
<dbReference type="GO" id="GO:0009435">
    <property type="term" value="P:NAD biosynthetic process"/>
    <property type="evidence" value="ECO:0007669"/>
    <property type="project" value="UniProtKB-UniRule"/>
</dbReference>
<dbReference type="CDD" id="cd02165">
    <property type="entry name" value="NMNAT"/>
    <property type="match status" value="1"/>
</dbReference>
<dbReference type="Gene3D" id="3.40.50.620">
    <property type="entry name" value="HUPs"/>
    <property type="match status" value="1"/>
</dbReference>
<dbReference type="HAMAP" id="MF_00244">
    <property type="entry name" value="NaMN_adenylyltr"/>
    <property type="match status" value="1"/>
</dbReference>
<dbReference type="InterPro" id="IPR004821">
    <property type="entry name" value="Cyt_trans-like"/>
</dbReference>
<dbReference type="InterPro" id="IPR005248">
    <property type="entry name" value="NadD/NMNAT"/>
</dbReference>
<dbReference type="InterPro" id="IPR014729">
    <property type="entry name" value="Rossmann-like_a/b/a_fold"/>
</dbReference>
<dbReference type="NCBIfam" id="TIGR00125">
    <property type="entry name" value="cyt_tran_rel"/>
    <property type="match status" value="1"/>
</dbReference>
<dbReference type="NCBIfam" id="TIGR00482">
    <property type="entry name" value="nicotinate (nicotinamide) nucleotide adenylyltransferase"/>
    <property type="match status" value="1"/>
</dbReference>
<dbReference type="NCBIfam" id="NF000840">
    <property type="entry name" value="PRK00071.1-3"/>
    <property type="match status" value="1"/>
</dbReference>
<dbReference type="PANTHER" id="PTHR39321">
    <property type="entry name" value="NICOTINATE-NUCLEOTIDE ADENYLYLTRANSFERASE-RELATED"/>
    <property type="match status" value="1"/>
</dbReference>
<dbReference type="PANTHER" id="PTHR39321:SF3">
    <property type="entry name" value="PHOSPHOPANTETHEINE ADENYLYLTRANSFERASE"/>
    <property type="match status" value="1"/>
</dbReference>
<dbReference type="Pfam" id="PF01467">
    <property type="entry name" value="CTP_transf_like"/>
    <property type="match status" value="1"/>
</dbReference>
<dbReference type="SUPFAM" id="SSF52374">
    <property type="entry name" value="Nucleotidylyl transferase"/>
    <property type="match status" value="1"/>
</dbReference>
<gene>
    <name evidence="1" type="primary">nadD</name>
    <name type="ordered locus">DP2587</name>
</gene>